<evidence type="ECO:0000255" key="1">
    <source>
        <dbReference type="HAMAP-Rule" id="MF_00818"/>
    </source>
</evidence>
<comment type="function">
    <text evidence="1">Catalyzes the NADPH-dependent reduction of 7-cyano-7-deazaguanine (preQ0) to 7-aminomethyl-7-deazaguanine (preQ1).</text>
</comment>
<comment type="catalytic activity">
    <reaction evidence="1">
        <text>7-aminomethyl-7-carbaguanine + 2 NADP(+) = 7-cyano-7-deazaguanine + 2 NADPH + 3 H(+)</text>
        <dbReference type="Rhea" id="RHEA:13409"/>
        <dbReference type="ChEBI" id="CHEBI:15378"/>
        <dbReference type="ChEBI" id="CHEBI:45075"/>
        <dbReference type="ChEBI" id="CHEBI:57783"/>
        <dbReference type="ChEBI" id="CHEBI:58349"/>
        <dbReference type="ChEBI" id="CHEBI:58703"/>
        <dbReference type="EC" id="1.7.1.13"/>
    </reaction>
</comment>
<comment type="pathway">
    <text evidence="1">tRNA modification; tRNA-queuosine biosynthesis.</text>
</comment>
<comment type="subcellular location">
    <subcellularLocation>
        <location evidence="1">Cytoplasm</location>
    </subcellularLocation>
</comment>
<comment type="similarity">
    <text evidence="1">Belongs to the GTP cyclohydrolase I family. QueF type 1 subfamily.</text>
</comment>
<protein>
    <recommendedName>
        <fullName evidence="1">NADPH-dependent 7-cyano-7-deazaguanine reductase</fullName>
        <ecNumber evidence="1">1.7.1.13</ecNumber>
    </recommendedName>
    <alternativeName>
        <fullName evidence="1">7-cyano-7-carbaguanine reductase</fullName>
    </alternativeName>
    <alternativeName>
        <fullName evidence="1">NADPH-dependent nitrile oxidoreductase</fullName>
    </alternativeName>
    <alternativeName>
        <fullName evidence="1">PreQ(0) reductase</fullName>
    </alternativeName>
</protein>
<name>QUEF_RHOPS</name>
<reference key="1">
    <citation type="submission" date="2006-03" db="EMBL/GenBank/DDBJ databases">
        <title>Complete sequence of Rhodopseudomonas palustris BisB5.</title>
        <authorList>
            <consortium name="US DOE Joint Genome Institute"/>
            <person name="Copeland A."/>
            <person name="Lucas S."/>
            <person name="Lapidus A."/>
            <person name="Barry K."/>
            <person name="Detter J.C."/>
            <person name="Glavina del Rio T."/>
            <person name="Hammon N."/>
            <person name="Israni S."/>
            <person name="Dalin E."/>
            <person name="Tice H."/>
            <person name="Pitluck S."/>
            <person name="Chain P."/>
            <person name="Malfatti S."/>
            <person name="Shin M."/>
            <person name="Vergez L."/>
            <person name="Schmutz J."/>
            <person name="Larimer F."/>
            <person name="Land M."/>
            <person name="Hauser L."/>
            <person name="Pelletier D.A."/>
            <person name="Kyrpides N."/>
            <person name="Lykidis A."/>
            <person name="Oda Y."/>
            <person name="Harwood C.S."/>
            <person name="Richardson P."/>
        </authorList>
    </citation>
    <scope>NUCLEOTIDE SEQUENCE [LARGE SCALE GENOMIC DNA]</scope>
    <source>
        <strain>BisB5</strain>
    </source>
</reference>
<accession>Q136E4</accession>
<keyword id="KW-0963">Cytoplasm</keyword>
<keyword id="KW-0521">NADP</keyword>
<keyword id="KW-0560">Oxidoreductase</keyword>
<keyword id="KW-0671">Queuosine biosynthesis</keyword>
<sequence length="158" mass="17534">MSRSPRKTPKSPSLQLGQAVEWPATPDAARLDRVPNPQAGTDYLVRFTAPEFTSLCPVTGQPDFAHLVIDYAPGAWLVESKSLKLYLASFRNHGGFHEDCTVSIGKRIAAEIKPKWLRIGGYWYPRGGIPIDVFWQTGKLPKGMWVPDQGVAPYRGRG</sequence>
<feature type="chain" id="PRO_1000062407" description="NADPH-dependent 7-cyano-7-deazaguanine reductase">
    <location>
        <begin position="1"/>
        <end position="158"/>
    </location>
</feature>
<feature type="active site" description="Thioimide intermediate" evidence="1">
    <location>
        <position position="56"/>
    </location>
</feature>
<feature type="active site" description="Proton donor" evidence="1">
    <location>
        <position position="63"/>
    </location>
</feature>
<feature type="binding site" evidence="1">
    <location>
        <begin position="78"/>
        <end position="80"/>
    </location>
    <ligand>
        <name>substrate</name>
    </ligand>
</feature>
<feature type="binding site" evidence="1">
    <location>
        <begin position="97"/>
        <end position="98"/>
    </location>
    <ligand>
        <name>substrate</name>
    </ligand>
</feature>
<proteinExistence type="inferred from homology"/>
<gene>
    <name evidence="1" type="primary">queF</name>
    <name type="ordered locus">RPD_2817</name>
</gene>
<dbReference type="EC" id="1.7.1.13" evidence="1"/>
<dbReference type="EMBL" id="CP000283">
    <property type="protein sequence ID" value="ABE40045.1"/>
    <property type="molecule type" value="Genomic_DNA"/>
</dbReference>
<dbReference type="SMR" id="Q136E4"/>
<dbReference type="STRING" id="316057.RPD_2817"/>
<dbReference type="KEGG" id="rpd:RPD_2817"/>
<dbReference type="eggNOG" id="COG0780">
    <property type="taxonomic scope" value="Bacteria"/>
</dbReference>
<dbReference type="HOGENOM" id="CLU_102489_0_1_5"/>
<dbReference type="BioCyc" id="RPAL316057:RPD_RS14150-MONOMER"/>
<dbReference type="UniPathway" id="UPA00392"/>
<dbReference type="Proteomes" id="UP000001818">
    <property type="component" value="Chromosome"/>
</dbReference>
<dbReference type="GO" id="GO:0005737">
    <property type="term" value="C:cytoplasm"/>
    <property type="evidence" value="ECO:0007669"/>
    <property type="project" value="UniProtKB-SubCell"/>
</dbReference>
<dbReference type="GO" id="GO:0033739">
    <property type="term" value="F:preQ1 synthase activity"/>
    <property type="evidence" value="ECO:0007669"/>
    <property type="project" value="UniProtKB-UniRule"/>
</dbReference>
<dbReference type="GO" id="GO:0008616">
    <property type="term" value="P:queuosine biosynthetic process"/>
    <property type="evidence" value="ECO:0007669"/>
    <property type="project" value="UniProtKB-UniRule"/>
</dbReference>
<dbReference type="GO" id="GO:0006400">
    <property type="term" value="P:tRNA modification"/>
    <property type="evidence" value="ECO:0007669"/>
    <property type="project" value="UniProtKB-UniRule"/>
</dbReference>
<dbReference type="Gene3D" id="3.30.1130.10">
    <property type="match status" value="1"/>
</dbReference>
<dbReference type="HAMAP" id="MF_00818">
    <property type="entry name" value="QueF_type1"/>
    <property type="match status" value="1"/>
</dbReference>
<dbReference type="InterPro" id="IPR043133">
    <property type="entry name" value="GTP-CH-I_C/QueF"/>
</dbReference>
<dbReference type="InterPro" id="IPR050084">
    <property type="entry name" value="NADPH_dep_7-cyano-7-deazaG_red"/>
</dbReference>
<dbReference type="InterPro" id="IPR029500">
    <property type="entry name" value="QueF"/>
</dbReference>
<dbReference type="InterPro" id="IPR016856">
    <property type="entry name" value="QueF_type1"/>
</dbReference>
<dbReference type="NCBIfam" id="TIGR03139">
    <property type="entry name" value="QueF-II"/>
    <property type="match status" value="1"/>
</dbReference>
<dbReference type="PANTHER" id="PTHR34354">
    <property type="entry name" value="NADPH-DEPENDENT 7-CYANO-7-DEAZAGUANINE REDUCTASE"/>
    <property type="match status" value="1"/>
</dbReference>
<dbReference type="PANTHER" id="PTHR34354:SF1">
    <property type="entry name" value="NADPH-DEPENDENT 7-CYANO-7-DEAZAGUANINE REDUCTASE"/>
    <property type="match status" value="1"/>
</dbReference>
<dbReference type="Pfam" id="PF14489">
    <property type="entry name" value="QueF"/>
    <property type="match status" value="1"/>
</dbReference>
<dbReference type="SUPFAM" id="SSF55620">
    <property type="entry name" value="Tetrahydrobiopterin biosynthesis enzymes-like"/>
    <property type="match status" value="1"/>
</dbReference>
<organism>
    <name type="scientific">Rhodopseudomonas palustris (strain BisB5)</name>
    <dbReference type="NCBI Taxonomy" id="316057"/>
    <lineage>
        <taxon>Bacteria</taxon>
        <taxon>Pseudomonadati</taxon>
        <taxon>Pseudomonadota</taxon>
        <taxon>Alphaproteobacteria</taxon>
        <taxon>Hyphomicrobiales</taxon>
        <taxon>Nitrobacteraceae</taxon>
        <taxon>Rhodopseudomonas</taxon>
    </lineage>
</organism>